<accession>Q6GFB8</accession>
<reference key="1">
    <citation type="journal article" date="2004" name="Proc. Natl. Acad. Sci. U.S.A.">
        <title>Complete genomes of two clinical Staphylococcus aureus strains: evidence for the rapid evolution of virulence and drug resistance.</title>
        <authorList>
            <person name="Holden M.T.G."/>
            <person name="Feil E.J."/>
            <person name="Lindsay J.A."/>
            <person name="Peacock S.J."/>
            <person name="Day N.P.J."/>
            <person name="Enright M.C."/>
            <person name="Foster T.J."/>
            <person name="Moore C.E."/>
            <person name="Hurst L."/>
            <person name="Atkin R."/>
            <person name="Barron A."/>
            <person name="Bason N."/>
            <person name="Bentley S.D."/>
            <person name="Chillingworth C."/>
            <person name="Chillingworth T."/>
            <person name="Churcher C."/>
            <person name="Clark L."/>
            <person name="Corton C."/>
            <person name="Cronin A."/>
            <person name="Doggett J."/>
            <person name="Dowd L."/>
            <person name="Feltwell T."/>
            <person name="Hance Z."/>
            <person name="Harris B."/>
            <person name="Hauser H."/>
            <person name="Holroyd S."/>
            <person name="Jagels K."/>
            <person name="James K.D."/>
            <person name="Lennard N."/>
            <person name="Line A."/>
            <person name="Mayes R."/>
            <person name="Moule S."/>
            <person name="Mungall K."/>
            <person name="Ormond D."/>
            <person name="Quail M.A."/>
            <person name="Rabbinowitsch E."/>
            <person name="Rutherford K.M."/>
            <person name="Sanders M."/>
            <person name="Sharp S."/>
            <person name="Simmonds M."/>
            <person name="Stevens K."/>
            <person name="Whitehead S."/>
            <person name="Barrell B.G."/>
            <person name="Spratt B.G."/>
            <person name="Parkhill J."/>
        </authorList>
    </citation>
    <scope>NUCLEOTIDE SEQUENCE [LARGE SCALE GENOMIC DNA]</scope>
    <source>
        <strain>MRSA252</strain>
    </source>
</reference>
<keyword id="KW-0677">Repeat</keyword>
<keyword id="KW-0732">Signal</keyword>
<sequence>MKFKSLITTTLALGVLASTGANFNTNEASAAAKQIDKSSSSLHHGYSKIQIPYTITVNGTSQNILSSLTFNKNQQISYKDIENKVKSVLYFNRGISDIDLRLSKQAKYTVHFKNGTKRVVDLKAGIHTADLINTSDIKAISVNVDTKKQVKDKEAKANVQVPYTITVNGTSQNILSNLTFKKNQQISYKDLENNVKSVLKSNRGITDVDLRLSKQAKFTVNFKNGTKKVIDLKAGIYTANLINTGDIKNININVETKKQAKDKEAKANNQVPYSINLNGTTTNIQSNLAFSNKPWTNYKNLTAKVKSVLKSDRGVSERDLKHAKKAYYTVYFKNGGKRVIHLNSNIYTANLVHAKDIKKIEVTVKTGSKANAERYVPYTIAVNGTSTPNLSDLKFKGDSRVSYSDITKKVKSVLKYDRGIGERELKYAKKATYTVHFKNGTKKVINLNSKISQLNLLFVKDIKKIDVDVKTGSKAKADSYVPYTIAVNGTSTPIASKLKLSNKQLIGYQDLNKKVKSVLKHDRGINDIELKFAKQAKYTVHFKNGKTQVVDLKSDIFTRNLFSVKDIKKIDIDVKQHTKSNKALNKVSNIATKVKFPVTINGFSNVVSNEFAFLHPHKITTNDLNAKLRLALASDQGITKHDIGLSERTVYKVYFKDGSSKFVDLKAAKQDSKVFKATDIKKVDIEIKF</sequence>
<protein>
    <recommendedName>
        <fullName>Protein map</fullName>
    </recommendedName>
    <alternativeName>
        <fullName>MHC class II analog protein</fullName>
    </alternativeName>
</protein>
<name>MAP_STAAR</name>
<proteinExistence type="inferred from homology"/>
<gene>
    <name type="primary">map</name>
    <name type="ordered locus">SAR2030</name>
</gene>
<dbReference type="EMBL" id="BX571856">
    <property type="protein sequence ID" value="CAG41016.1"/>
    <property type="molecule type" value="Genomic_DNA"/>
</dbReference>
<dbReference type="RefSeq" id="WP_000669729.1">
    <property type="nucleotide sequence ID" value="NC_002952.2"/>
</dbReference>
<dbReference type="SMR" id="Q6GFB8"/>
<dbReference type="KEGG" id="sar:SAR2030"/>
<dbReference type="HOGENOM" id="CLU_351921_0_0_9"/>
<dbReference type="Proteomes" id="UP000000596">
    <property type="component" value="Chromosome"/>
</dbReference>
<dbReference type="Gene3D" id="3.10.20.120">
    <property type="match status" value="6"/>
</dbReference>
<dbReference type="InterPro" id="IPR005298">
    <property type="entry name" value="MAP_dom"/>
</dbReference>
<dbReference type="Pfam" id="PF03642">
    <property type="entry name" value="MAP"/>
    <property type="match status" value="6"/>
</dbReference>
<dbReference type="PROSITE" id="PS51223">
    <property type="entry name" value="MAP"/>
    <property type="match status" value="6"/>
</dbReference>
<organism>
    <name type="scientific">Staphylococcus aureus (strain MRSA252)</name>
    <dbReference type="NCBI Taxonomy" id="282458"/>
    <lineage>
        <taxon>Bacteria</taxon>
        <taxon>Bacillati</taxon>
        <taxon>Bacillota</taxon>
        <taxon>Bacilli</taxon>
        <taxon>Bacillales</taxon>
        <taxon>Staphylococcaceae</taxon>
        <taxon>Staphylococcus</taxon>
    </lineage>
</organism>
<feature type="signal peptide" evidence="1">
    <location>
        <begin position="1"/>
        <end position="30"/>
    </location>
</feature>
<feature type="chain" id="PRO_0000227540" description="Protein map">
    <location>
        <begin position="31"/>
        <end position="689"/>
    </location>
</feature>
<feature type="repeat" description="MAP 1">
    <location>
        <begin position="45"/>
        <end position="154"/>
    </location>
</feature>
<feature type="repeat" description="MAP 2">
    <location>
        <begin position="155"/>
        <end position="264"/>
    </location>
</feature>
<feature type="repeat" description="MAP 3">
    <location>
        <begin position="265"/>
        <end position="374"/>
    </location>
</feature>
<feature type="repeat" description="MAP 4">
    <location>
        <begin position="375"/>
        <end position="474"/>
    </location>
</feature>
<feature type="repeat" description="MAP 5">
    <location>
        <begin position="475"/>
        <end position="584"/>
    </location>
</feature>
<feature type="repeat" description="MAP 6">
    <location>
        <begin position="588"/>
        <end position="689"/>
    </location>
</feature>
<evidence type="ECO:0000250" key="1"/>
<comment type="function">
    <text evidence="1">Both native and recombinant protein bound to labeled vitronectin, fibrinogen, recombinant osteopontin and fibronectin. It was also shown to be able to bind to a 15-amino acid synthetic peptide of vitronectin. Map could affect the severity of arthritis and osteomyelitis in mice through a T-cell-mediated mechanism and could play a role in abscess formation through a T-cell-independent mechanisms. It could potentiate the survival of the bacterium by modulating host immunity (By similarity).</text>
</comment>
<comment type="domain">
    <text>Each MAP domain contains a 31-residue subdomain that shares striking sequence homology with a segment present in the peptide binding groove of the beta chain of the MHC class II proteins from different mammalian species.</text>
</comment>